<reference key="1">
    <citation type="journal article" date="2006" name="Proc. Natl. Acad. Sci. U.S.A.">
        <title>Molecular genetic anatomy of inter- and intraserotype variation in the human bacterial pathogen group A Streptococcus.</title>
        <authorList>
            <person name="Beres S.B."/>
            <person name="Richter E.W."/>
            <person name="Nagiec M.J."/>
            <person name="Sumby P."/>
            <person name="Porcella S.F."/>
            <person name="DeLeo F.R."/>
            <person name="Musser J.M."/>
        </authorList>
    </citation>
    <scope>NUCLEOTIDE SEQUENCE [LARGE SCALE GENOMIC DNA]</scope>
    <source>
        <strain>MGAS10750</strain>
    </source>
</reference>
<protein>
    <recommendedName>
        <fullName evidence="1">DNA-directed RNA polymerase subunit beta</fullName>
        <shortName evidence="1">RNAP subunit beta</shortName>
        <ecNumber evidence="1">2.7.7.6</ecNumber>
    </recommendedName>
    <alternativeName>
        <fullName evidence="1">RNA polymerase subunit beta</fullName>
    </alternativeName>
    <alternativeName>
        <fullName evidence="1">Transcriptase subunit beta</fullName>
    </alternativeName>
</protein>
<gene>
    <name evidence="1" type="primary">rpoB</name>
    <name type="ordered locus">MGAS10750_Spy0090</name>
</gene>
<accession>Q1J8X1</accession>
<proteinExistence type="inferred from homology"/>
<comment type="function">
    <text evidence="1">DNA-dependent RNA polymerase catalyzes the transcription of DNA into RNA using the four ribonucleoside triphosphates as substrates.</text>
</comment>
<comment type="catalytic activity">
    <reaction evidence="1">
        <text>RNA(n) + a ribonucleoside 5'-triphosphate = RNA(n+1) + diphosphate</text>
        <dbReference type="Rhea" id="RHEA:21248"/>
        <dbReference type="Rhea" id="RHEA-COMP:14527"/>
        <dbReference type="Rhea" id="RHEA-COMP:17342"/>
        <dbReference type="ChEBI" id="CHEBI:33019"/>
        <dbReference type="ChEBI" id="CHEBI:61557"/>
        <dbReference type="ChEBI" id="CHEBI:140395"/>
        <dbReference type="EC" id="2.7.7.6"/>
    </reaction>
</comment>
<comment type="subunit">
    <text evidence="1">The RNAP catalytic core consists of 2 alpha, 1 beta, 1 beta' and 1 omega subunit. When a sigma factor is associated with the core the holoenzyme is formed, which can initiate transcription.</text>
</comment>
<comment type="similarity">
    <text evidence="1">Belongs to the RNA polymerase beta chain family.</text>
</comment>
<sequence length="1188" mass="132855">MAGHEVRYGKHRTRRSFSRIKEVLDLPNLIEIQTDSFQDFLDSGLKEVFEDVLPISNFTDTMELEFVGYEFKEPKYTLEEARIHDASYSAPIFVTFRLVNKETGEIKTQEVFFGDFPIMTEMGTFIINGGERIIVSQLVRSPGVYFNDKVDKNGKVGYGSTVIPNRGAWLELETDSKDIAYTRIDRTRKIPFTTLVRALGFSGDDEIVDIFGESDLVRNTIEKDIHKNPSDSRTDEALKEIYERLRPGEPKTADSSRSLLIARFFDARRYDLAAVGRYKVNKKLNIKTRLLNQIIAENLVDAETGEILVEAGTEMTRSVIESIEEHLDGDLNKFVYTPNDYAVVTEPVVLQKFKVVSPIDPDRVVTIVGNANPDDKVRALTPADILAEMSYFLNLAEGLGKVDDIDHLGNRRIRAVGELLANQFRIGLARMERNVRERMSVQDNDVLTPQQIINIRPVTAAVKEFFGSSQLSQFMDQHNPLSELSHKRRLSALGPGGLTRDRAGYEVRDVHYTHYGRMCPIETPEGPNIGLINNLSSFGHLNKYGFIQTPYRKVDRATGRVTNEIVWLTADEEDEYTVAQANSKLNEDGTFAEEIVMGRHQGNNQEFSASVVDFVDVSPKQVVAVATACIPFLENDDSNRALMGANMQRQAVPLIDPKAPYVGTGMEYQAAHDSGAAVIAQHNGKVVFSDAEKVEIRRQDGSLDVYHITKFRRSNSGTAYNQRTLVKVGDIVEKGDFIADGPSMENGEMALGQNPVVAYMTWEGYNFEDAVIMSERLVKEDVYTSVHLEEFESETRDTKLGPEEITREIPNVGEEALKDLDEMGIIRIGAEVKEGDILVGKVTPKGEKDLSAEERLLHAIFGDKSREVRDTSLRVPHGGDGIVRDVKIFTRANGDELQSGVNMLVRVYIAQKRKIKVGDKMAGRHGNKGVVSRIVPVEDMPYLPDGTPVDIMLNPLGVPSRMNIGQVMELHLGMAARNLGIHIATPVFDGASSEDLWDTVREAGMDSDAKTVLYDGRTGEPFDNRVSVGVMYMIKLHHMVDDKLHARSVGPYSLVTQQPLGGKAQFGGQRFGEMEVWALEAYGASNVLQEILTYKSDDVTGRLKAYEAITKGKPIPKPGVPESFRVLVKELQSLGLDMRVLDEDDNEVELRDLDEGEDDDIMHVDDLEKAREKQAQETQEVSETTDEK</sequence>
<name>RPOB_STRPF</name>
<organism>
    <name type="scientific">Streptococcus pyogenes serotype M4 (strain MGAS10750)</name>
    <dbReference type="NCBI Taxonomy" id="370554"/>
    <lineage>
        <taxon>Bacteria</taxon>
        <taxon>Bacillati</taxon>
        <taxon>Bacillota</taxon>
        <taxon>Bacilli</taxon>
        <taxon>Lactobacillales</taxon>
        <taxon>Streptococcaceae</taxon>
        <taxon>Streptococcus</taxon>
    </lineage>
</organism>
<evidence type="ECO:0000255" key="1">
    <source>
        <dbReference type="HAMAP-Rule" id="MF_01321"/>
    </source>
</evidence>
<feature type="chain" id="PRO_0000300412" description="DNA-directed RNA polymerase subunit beta">
    <location>
        <begin position="1"/>
        <end position="1188"/>
    </location>
</feature>
<keyword id="KW-0240">DNA-directed RNA polymerase</keyword>
<keyword id="KW-0548">Nucleotidyltransferase</keyword>
<keyword id="KW-0804">Transcription</keyword>
<keyword id="KW-0808">Transferase</keyword>
<dbReference type="EC" id="2.7.7.6" evidence="1"/>
<dbReference type="EMBL" id="CP000262">
    <property type="protein sequence ID" value="ABF37040.1"/>
    <property type="molecule type" value="Genomic_DNA"/>
</dbReference>
<dbReference type="SMR" id="Q1J8X1"/>
<dbReference type="KEGG" id="spi:MGAS10750_Spy0090"/>
<dbReference type="HOGENOM" id="CLU_000524_4_1_9"/>
<dbReference type="Proteomes" id="UP000002434">
    <property type="component" value="Chromosome"/>
</dbReference>
<dbReference type="GO" id="GO:0000428">
    <property type="term" value="C:DNA-directed RNA polymerase complex"/>
    <property type="evidence" value="ECO:0007669"/>
    <property type="project" value="UniProtKB-KW"/>
</dbReference>
<dbReference type="GO" id="GO:0003677">
    <property type="term" value="F:DNA binding"/>
    <property type="evidence" value="ECO:0007669"/>
    <property type="project" value="UniProtKB-UniRule"/>
</dbReference>
<dbReference type="GO" id="GO:0003899">
    <property type="term" value="F:DNA-directed RNA polymerase activity"/>
    <property type="evidence" value="ECO:0007669"/>
    <property type="project" value="UniProtKB-UniRule"/>
</dbReference>
<dbReference type="GO" id="GO:0032549">
    <property type="term" value="F:ribonucleoside binding"/>
    <property type="evidence" value="ECO:0007669"/>
    <property type="project" value="InterPro"/>
</dbReference>
<dbReference type="GO" id="GO:0006351">
    <property type="term" value="P:DNA-templated transcription"/>
    <property type="evidence" value="ECO:0007669"/>
    <property type="project" value="UniProtKB-UniRule"/>
</dbReference>
<dbReference type="CDD" id="cd00653">
    <property type="entry name" value="RNA_pol_B_RPB2"/>
    <property type="match status" value="1"/>
</dbReference>
<dbReference type="Gene3D" id="2.40.50.100">
    <property type="match status" value="1"/>
</dbReference>
<dbReference type="Gene3D" id="2.40.50.150">
    <property type="match status" value="1"/>
</dbReference>
<dbReference type="Gene3D" id="3.90.1100.10">
    <property type="match status" value="2"/>
</dbReference>
<dbReference type="Gene3D" id="2.30.150.10">
    <property type="entry name" value="DNA-directed RNA polymerase, beta subunit, external 1 domain"/>
    <property type="match status" value="1"/>
</dbReference>
<dbReference type="Gene3D" id="2.40.270.10">
    <property type="entry name" value="DNA-directed RNA polymerase, subunit 2, domain 6"/>
    <property type="match status" value="1"/>
</dbReference>
<dbReference type="Gene3D" id="3.90.1800.10">
    <property type="entry name" value="RNA polymerase alpha subunit dimerisation domain"/>
    <property type="match status" value="1"/>
</dbReference>
<dbReference type="Gene3D" id="3.90.1110.10">
    <property type="entry name" value="RNA polymerase Rpb2, domain 2"/>
    <property type="match status" value="1"/>
</dbReference>
<dbReference type="HAMAP" id="MF_01321">
    <property type="entry name" value="RNApol_bact_RpoB"/>
    <property type="match status" value="1"/>
</dbReference>
<dbReference type="InterPro" id="IPR042107">
    <property type="entry name" value="DNA-dir_RNA_pol_bsu_ext_1_sf"/>
</dbReference>
<dbReference type="InterPro" id="IPR019462">
    <property type="entry name" value="DNA-dir_RNA_pol_bsu_external_1"/>
</dbReference>
<dbReference type="InterPro" id="IPR015712">
    <property type="entry name" value="DNA-dir_RNA_pol_su2"/>
</dbReference>
<dbReference type="InterPro" id="IPR007120">
    <property type="entry name" value="DNA-dir_RNAP_su2_dom"/>
</dbReference>
<dbReference type="InterPro" id="IPR037033">
    <property type="entry name" value="DNA-dir_RNAP_su2_hyb_sf"/>
</dbReference>
<dbReference type="InterPro" id="IPR010243">
    <property type="entry name" value="RNA_pol_bsu_bac"/>
</dbReference>
<dbReference type="InterPro" id="IPR007121">
    <property type="entry name" value="RNA_pol_bsu_CS"/>
</dbReference>
<dbReference type="InterPro" id="IPR007644">
    <property type="entry name" value="RNA_pol_bsu_protrusion"/>
</dbReference>
<dbReference type="InterPro" id="IPR007642">
    <property type="entry name" value="RNA_pol_Rpb2_2"/>
</dbReference>
<dbReference type="InterPro" id="IPR037034">
    <property type="entry name" value="RNA_pol_Rpb2_2_sf"/>
</dbReference>
<dbReference type="InterPro" id="IPR007645">
    <property type="entry name" value="RNA_pol_Rpb2_3"/>
</dbReference>
<dbReference type="InterPro" id="IPR007641">
    <property type="entry name" value="RNA_pol_Rpb2_7"/>
</dbReference>
<dbReference type="InterPro" id="IPR014724">
    <property type="entry name" value="RNA_pol_RPB2_OB-fold"/>
</dbReference>
<dbReference type="NCBIfam" id="NF001616">
    <property type="entry name" value="PRK00405.1"/>
    <property type="match status" value="1"/>
</dbReference>
<dbReference type="NCBIfam" id="TIGR02013">
    <property type="entry name" value="rpoB"/>
    <property type="match status" value="1"/>
</dbReference>
<dbReference type="PANTHER" id="PTHR20856">
    <property type="entry name" value="DNA-DIRECTED RNA POLYMERASE I SUBUNIT 2"/>
    <property type="match status" value="1"/>
</dbReference>
<dbReference type="Pfam" id="PF04563">
    <property type="entry name" value="RNA_pol_Rpb2_1"/>
    <property type="match status" value="1"/>
</dbReference>
<dbReference type="Pfam" id="PF04561">
    <property type="entry name" value="RNA_pol_Rpb2_2"/>
    <property type="match status" value="2"/>
</dbReference>
<dbReference type="Pfam" id="PF04565">
    <property type="entry name" value="RNA_pol_Rpb2_3"/>
    <property type="match status" value="1"/>
</dbReference>
<dbReference type="Pfam" id="PF10385">
    <property type="entry name" value="RNA_pol_Rpb2_45"/>
    <property type="match status" value="1"/>
</dbReference>
<dbReference type="Pfam" id="PF00562">
    <property type="entry name" value="RNA_pol_Rpb2_6"/>
    <property type="match status" value="1"/>
</dbReference>
<dbReference type="Pfam" id="PF04560">
    <property type="entry name" value="RNA_pol_Rpb2_7"/>
    <property type="match status" value="1"/>
</dbReference>
<dbReference type="SUPFAM" id="SSF64484">
    <property type="entry name" value="beta and beta-prime subunits of DNA dependent RNA-polymerase"/>
    <property type="match status" value="1"/>
</dbReference>
<dbReference type="PROSITE" id="PS01166">
    <property type="entry name" value="RNA_POL_BETA"/>
    <property type="match status" value="1"/>
</dbReference>